<reference key="1">
    <citation type="journal article" date="1998" name="Insect Biochem. Mol. Biol.">
        <title>Identification and developmental expression of the mitochondrial phosphate transport protein gene from the spruce budworm, Choristoneura fumiferana.</title>
        <authorList>
            <person name="Feng Q.-L."/>
            <person name="Ladd T.R."/>
            <person name="Retnakaran A."/>
            <person name="Davey K.G."/>
            <person name="Palli S.R."/>
        </authorList>
    </citation>
    <scope>NUCLEOTIDE SEQUENCE [MRNA]</scope>
</reference>
<comment type="function">
    <text>Transport of phosphate groups from the cytosol to the mitochondrial matrix.</text>
</comment>
<comment type="subcellular location">
    <subcellularLocation>
        <location>Mitochondrion inner membrane</location>
        <topology>Multi-pass membrane protein</topology>
    </subcellularLocation>
</comment>
<comment type="similarity">
    <text evidence="2">Belongs to the mitochondrial carrier (TC 2.A.29) family.</text>
</comment>
<organism>
    <name type="scientific">Choristoneura fumiferana</name>
    <name type="common">Spruce budworm moth</name>
    <name type="synonym">Archips fumiferana</name>
    <dbReference type="NCBI Taxonomy" id="7141"/>
    <lineage>
        <taxon>Eukaryota</taxon>
        <taxon>Metazoa</taxon>
        <taxon>Ecdysozoa</taxon>
        <taxon>Arthropoda</taxon>
        <taxon>Hexapoda</taxon>
        <taxon>Insecta</taxon>
        <taxon>Pterygota</taxon>
        <taxon>Neoptera</taxon>
        <taxon>Endopterygota</taxon>
        <taxon>Lepidoptera</taxon>
        <taxon>Glossata</taxon>
        <taxon>Ditrysia</taxon>
        <taxon>Tortricoidea</taxon>
        <taxon>Tortricidae</taxon>
        <taxon>Tortricinae</taxon>
        <taxon>Choristoneura</taxon>
    </lineage>
</organism>
<protein>
    <recommendedName>
        <fullName>Phosphate carrier protein, mitochondrial</fullName>
    </recommendedName>
    <alternativeName>
        <fullName>Phosphate transport protein</fullName>
        <shortName>PTP</shortName>
    </alternativeName>
</protein>
<proteinExistence type="evidence at transcript level"/>
<accession>O61703</accession>
<dbReference type="EMBL" id="AF062383">
    <property type="protein sequence ID" value="AAC79426.1"/>
    <property type="molecule type" value="mRNA"/>
</dbReference>
<dbReference type="SMR" id="O61703"/>
<dbReference type="GO" id="GO:0005743">
    <property type="term" value="C:mitochondrial inner membrane"/>
    <property type="evidence" value="ECO:0007669"/>
    <property type="project" value="UniProtKB-SubCell"/>
</dbReference>
<dbReference type="GO" id="GO:0005315">
    <property type="term" value="F:phosphate transmembrane transporter activity"/>
    <property type="evidence" value="ECO:0007669"/>
    <property type="project" value="InterPro"/>
</dbReference>
<dbReference type="GO" id="GO:1990547">
    <property type="term" value="P:mitochondrial phosphate ion transmembrane transport"/>
    <property type="evidence" value="ECO:0007669"/>
    <property type="project" value="InterPro"/>
</dbReference>
<dbReference type="FunFam" id="1.50.40.10:FF:000005">
    <property type="entry name" value="Mitochondrial phosphate carrier protein 2"/>
    <property type="match status" value="1"/>
</dbReference>
<dbReference type="Gene3D" id="1.50.40.10">
    <property type="entry name" value="Mitochondrial carrier domain"/>
    <property type="match status" value="1"/>
</dbReference>
<dbReference type="InterPro" id="IPR018108">
    <property type="entry name" value="Mitochondrial_sb/sol_carrier"/>
</dbReference>
<dbReference type="InterPro" id="IPR023395">
    <property type="entry name" value="Mt_carrier_dom_sf"/>
</dbReference>
<dbReference type="InterPro" id="IPR044677">
    <property type="entry name" value="SLC25A3/Pic2/Mir1-like"/>
</dbReference>
<dbReference type="PANTHER" id="PTHR45671">
    <property type="entry name" value="SOLUTE CARRIER FAMILY 25 (MITOCHONDRIAL CARRIER PHOSPHATE CARRIER), MEMBER 3, LIKE-RELATED-RELATED"/>
    <property type="match status" value="1"/>
</dbReference>
<dbReference type="PANTHER" id="PTHR45671:SF10">
    <property type="entry name" value="SOLUTE CARRIER FAMILY 25 MEMBER 3"/>
    <property type="match status" value="1"/>
</dbReference>
<dbReference type="Pfam" id="PF00153">
    <property type="entry name" value="Mito_carr"/>
    <property type="match status" value="3"/>
</dbReference>
<dbReference type="SUPFAM" id="SSF103506">
    <property type="entry name" value="Mitochondrial carrier"/>
    <property type="match status" value="1"/>
</dbReference>
<dbReference type="PROSITE" id="PS50920">
    <property type="entry name" value="SOLCAR"/>
    <property type="match status" value="3"/>
</dbReference>
<name>MPCP_CHOFU</name>
<sequence>MFSSLLEAAKSSPFHGPLTPARCDAPAQGMAASAAPVGDSCEFGSTKYFALCGLGGILSCGITHTAVVPLDLVKCRLQVDADKYKNVVNGFRVSVREEGLRGLAKGWAPTFIGYSLQGLCKFGLYEVFKVQYNNMLDEETAYTYRTFVYLAASASAEFFADIALSPLEAAKVRIQTMPGVRQHTARRVAQDGPERGAWARSTRALVPLWGRQIPYTMMKFACFEKTVELLYKHVVPKPRAECSKGEQLVVTFAAGYIAGVFCAIVSHPADTVVSKLNQDKTATVGSIVGKLGFAGVWKGLGPRIIMIGTLTALQWFIYDAVKVWLRMPRPPPAEMPESMRKRLEAEGKL</sequence>
<evidence type="ECO:0000255" key="1"/>
<evidence type="ECO:0000305" key="2"/>
<keyword id="KW-0472">Membrane</keyword>
<keyword id="KW-0496">Mitochondrion</keyword>
<keyword id="KW-0999">Mitochondrion inner membrane</keyword>
<keyword id="KW-0677">Repeat</keyword>
<keyword id="KW-0809">Transit peptide</keyword>
<keyword id="KW-0812">Transmembrane</keyword>
<keyword id="KW-1133">Transmembrane helix</keyword>
<keyword id="KW-0813">Transport</keyword>
<feature type="transit peptide" description="Mitochondrion" evidence="1">
    <location>
        <begin position="1"/>
        <end status="unknown"/>
    </location>
</feature>
<feature type="chain" id="PRO_0000019260" description="Phosphate carrier protein, mitochondrial">
    <location>
        <begin status="unknown"/>
        <end position="349"/>
    </location>
</feature>
<feature type="transmembrane region" description="Helical; Name=1" evidence="1">
    <location>
        <begin position="48"/>
        <end position="68"/>
    </location>
</feature>
<feature type="transmembrane region" description="Helical; Name=2" evidence="1">
    <location>
        <begin position="108"/>
        <end position="128"/>
    </location>
</feature>
<feature type="transmembrane region" description="Helical; Name=3" evidence="1">
    <location>
        <begin position="147"/>
        <end position="167"/>
    </location>
</feature>
<feature type="transmembrane region" description="Helical; Name=4" evidence="1">
    <location>
        <begin position="207"/>
        <end position="227"/>
    </location>
</feature>
<feature type="transmembrane region" description="Helical; Name=5" evidence="1">
    <location>
        <begin position="248"/>
        <end position="268"/>
    </location>
</feature>
<feature type="transmembrane region" description="Helical; Name=6" evidence="1">
    <location>
        <begin position="304"/>
        <end position="324"/>
    </location>
</feature>
<feature type="repeat" description="Solcar 1">
    <location>
        <begin position="47"/>
        <end position="131"/>
    </location>
</feature>
<feature type="repeat" description="Solcar 2">
    <location>
        <begin position="144"/>
        <end position="229"/>
    </location>
</feature>
<feature type="repeat" description="Solcar 3">
    <location>
        <begin position="246"/>
        <end position="324"/>
    </location>
</feature>